<accession>Q6HA24</accession>
<accession>Q6CMB1</accession>
<keyword id="KW-1015">Disulfide bond</keyword>
<keyword id="KW-0274">FAD</keyword>
<keyword id="KW-0285">Flavoprotein</keyword>
<keyword id="KW-0496">Mitochondrion</keyword>
<keyword id="KW-0521">NADP</keyword>
<keyword id="KW-0560">Oxidoreductase</keyword>
<keyword id="KW-0676">Redox-active center</keyword>
<keyword id="KW-1185">Reference proteome</keyword>
<keyword id="KW-0809">Transit peptide</keyword>
<evidence type="ECO:0000250" key="1">
    <source>
        <dbReference type="UniProtKB" id="P29509"/>
    </source>
</evidence>
<evidence type="ECO:0000255" key="2"/>
<evidence type="ECO:0000305" key="3"/>
<name>TRXB_KLULA</name>
<organism>
    <name type="scientific">Kluyveromyces lactis (strain ATCC 8585 / CBS 2359 / DSM 70799 / NBRC 1267 / NRRL Y-1140 / WM37)</name>
    <name type="common">Yeast</name>
    <name type="synonym">Candida sphaerica</name>
    <dbReference type="NCBI Taxonomy" id="284590"/>
    <lineage>
        <taxon>Eukaryota</taxon>
        <taxon>Fungi</taxon>
        <taxon>Dikarya</taxon>
        <taxon>Ascomycota</taxon>
        <taxon>Saccharomycotina</taxon>
        <taxon>Saccharomycetes</taxon>
        <taxon>Saccharomycetales</taxon>
        <taxon>Saccharomycetaceae</taxon>
        <taxon>Kluyveromyces</taxon>
    </lineage>
</organism>
<feature type="transit peptide" description="Mitochondrion" evidence="2">
    <location>
        <begin position="1"/>
        <end position="30"/>
    </location>
</feature>
<feature type="chain" id="PRO_0000030302" description="Thioredoxin reductase, mitochondrial">
    <location>
        <begin position="31"/>
        <end position="349"/>
    </location>
</feature>
<feature type="binding site" evidence="1">
    <location>
        <begin position="41"/>
        <end position="44"/>
    </location>
    <ligand>
        <name>FAD</name>
        <dbReference type="ChEBI" id="CHEBI:57692"/>
    </ligand>
</feature>
<feature type="binding site" evidence="1">
    <location>
        <begin position="70"/>
        <end position="71"/>
    </location>
    <ligand>
        <name>FAD</name>
        <dbReference type="ChEBI" id="CHEBI:57692"/>
    </ligand>
</feature>
<feature type="binding site" evidence="1">
    <location>
        <position position="75"/>
    </location>
    <ligand>
        <name>FAD</name>
        <dbReference type="ChEBI" id="CHEBI:57692"/>
    </ligand>
</feature>
<feature type="binding site" evidence="1">
    <location>
        <position position="84"/>
    </location>
    <ligand>
        <name>FAD</name>
        <dbReference type="ChEBI" id="CHEBI:57692"/>
    </ligand>
</feature>
<feature type="binding site" evidence="1">
    <location>
        <position position="117"/>
    </location>
    <ligand>
        <name>FAD</name>
        <dbReference type="ChEBI" id="CHEBI:57692"/>
    </ligand>
</feature>
<feature type="binding site" evidence="1">
    <location>
        <position position="175"/>
    </location>
    <ligand>
        <name>FAD</name>
        <dbReference type="ChEBI" id="CHEBI:57692"/>
    </ligand>
</feature>
<feature type="binding site" evidence="1">
    <location>
        <position position="318"/>
    </location>
    <ligand>
        <name>FAD</name>
        <dbReference type="ChEBI" id="CHEBI:57692"/>
    </ligand>
</feature>
<feature type="binding site" evidence="1">
    <location>
        <begin position="325"/>
        <end position="327"/>
    </location>
    <ligand>
        <name>FAD</name>
        <dbReference type="ChEBI" id="CHEBI:57692"/>
    </ligand>
</feature>
<feature type="disulfide bond" description="Redox-active" evidence="1">
    <location>
        <begin position="172"/>
        <end position="175"/>
    </location>
</feature>
<sequence>MLLVRNSTLGRLSSLRGFFRNINESNIFYRMVHHKVTIIGSGPAAHTAAIYLARAEIKPTLYEGFMANGIAAGGQLTTTTEIENFPGFPDGLTGSELMDRMKAQSIKFGTDVITETVSKVDLSSRPFKFWTEFNEDQEPETTDAIILSTGASAKRLHLPGEETYWQQGISACAVCDGAVPIFRNKPLAVIGGGDSACEEAQFLTKYGSKVYMLVRKDHLRASQIMQRRAEQNEKIEILYNHVTLEAKGDGKYLNALKVKNVKTNEEYDLPVNGLFYAIGHTPATNIVAGQVDLDEAGYVKTVPGSTLTNVPGVFAAGDVQDARYRQAITSAGSGCMAALDAEKYITELE</sequence>
<gene>
    <name type="primary">TRR1</name>
    <name type="ordered locus">KLLA0E21692g</name>
</gene>
<reference key="1">
    <citation type="journal article" date="2004" name="Biochim. Biophys. Acta">
        <title>Isolation and characterization of two nuclear genes encoding glutathione and thioredoxin reductases from the yeast Kluyveromyces lactis.</title>
        <authorList>
            <person name="Tarrio N."/>
            <person name="Diaz Prado S."/>
            <person name="Cerdan M.E."/>
            <person name="Gonzales Siso M.I."/>
        </authorList>
    </citation>
    <scope>NUCLEOTIDE SEQUENCE [GENOMIC DNA]</scope>
</reference>
<reference key="2">
    <citation type="journal article" date="2004" name="Nature">
        <title>Genome evolution in yeasts.</title>
        <authorList>
            <person name="Dujon B."/>
            <person name="Sherman D."/>
            <person name="Fischer G."/>
            <person name="Durrens P."/>
            <person name="Casaregola S."/>
            <person name="Lafontaine I."/>
            <person name="de Montigny J."/>
            <person name="Marck C."/>
            <person name="Neuveglise C."/>
            <person name="Talla E."/>
            <person name="Goffard N."/>
            <person name="Frangeul L."/>
            <person name="Aigle M."/>
            <person name="Anthouard V."/>
            <person name="Babour A."/>
            <person name="Barbe V."/>
            <person name="Barnay S."/>
            <person name="Blanchin S."/>
            <person name="Beckerich J.-M."/>
            <person name="Beyne E."/>
            <person name="Bleykasten C."/>
            <person name="Boisrame A."/>
            <person name="Boyer J."/>
            <person name="Cattolico L."/>
            <person name="Confanioleri F."/>
            <person name="de Daruvar A."/>
            <person name="Despons L."/>
            <person name="Fabre E."/>
            <person name="Fairhead C."/>
            <person name="Ferry-Dumazet H."/>
            <person name="Groppi A."/>
            <person name="Hantraye F."/>
            <person name="Hennequin C."/>
            <person name="Jauniaux N."/>
            <person name="Joyet P."/>
            <person name="Kachouri R."/>
            <person name="Kerrest A."/>
            <person name="Koszul R."/>
            <person name="Lemaire M."/>
            <person name="Lesur I."/>
            <person name="Ma L."/>
            <person name="Muller H."/>
            <person name="Nicaud J.-M."/>
            <person name="Nikolski M."/>
            <person name="Oztas S."/>
            <person name="Ozier-Kalogeropoulos O."/>
            <person name="Pellenz S."/>
            <person name="Potier S."/>
            <person name="Richard G.-F."/>
            <person name="Straub M.-L."/>
            <person name="Suleau A."/>
            <person name="Swennen D."/>
            <person name="Tekaia F."/>
            <person name="Wesolowski-Louvel M."/>
            <person name="Westhof E."/>
            <person name="Wirth B."/>
            <person name="Zeniou-Meyer M."/>
            <person name="Zivanovic Y."/>
            <person name="Bolotin-Fukuhara M."/>
            <person name="Thierry A."/>
            <person name="Bouchier C."/>
            <person name="Caudron B."/>
            <person name="Scarpelli C."/>
            <person name="Gaillardin C."/>
            <person name="Weissenbach J."/>
            <person name="Wincker P."/>
            <person name="Souciet J.-L."/>
        </authorList>
    </citation>
    <scope>NUCLEOTIDE SEQUENCE [LARGE SCALE GENOMIC DNA]</scope>
    <source>
        <strain>ATCC 8585 / CBS 2359 / DSM 70799 / NBRC 1267 / NRRL Y-1140 / WM37</strain>
    </source>
</reference>
<protein>
    <recommendedName>
        <fullName>Thioredoxin reductase, mitochondrial</fullName>
        <ecNumber>1.8.1.9</ecNumber>
    </recommendedName>
</protein>
<comment type="catalytic activity">
    <reaction>
        <text>[thioredoxin]-dithiol + NADP(+) = [thioredoxin]-disulfide + NADPH + H(+)</text>
        <dbReference type="Rhea" id="RHEA:20345"/>
        <dbReference type="Rhea" id="RHEA-COMP:10698"/>
        <dbReference type="Rhea" id="RHEA-COMP:10700"/>
        <dbReference type="ChEBI" id="CHEBI:15378"/>
        <dbReference type="ChEBI" id="CHEBI:29950"/>
        <dbReference type="ChEBI" id="CHEBI:50058"/>
        <dbReference type="ChEBI" id="CHEBI:57783"/>
        <dbReference type="ChEBI" id="CHEBI:58349"/>
        <dbReference type="EC" id="1.8.1.9"/>
    </reaction>
</comment>
<comment type="cofactor">
    <cofactor evidence="1">
        <name>FAD</name>
        <dbReference type="ChEBI" id="CHEBI:57692"/>
    </cofactor>
    <text evidence="1">Binds 1 FAD per subunit.</text>
</comment>
<comment type="subunit">
    <text evidence="1">Homodimer.</text>
</comment>
<comment type="subcellular location">
    <subcellularLocation>
        <location evidence="3">Mitochondrion</location>
    </subcellularLocation>
</comment>
<comment type="miscellaneous">
    <text>The active site is a redox-active disulfide bond.</text>
</comment>
<comment type="similarity">
    <text evidence="3">Belongs to the class-II pyridine nucleotide-disulfide oxidoreductase family.</text>
</comment>
<dbReference type="EC" id="1.8.1.9"/>
<dbReference type="EMBL" id="AJ504413">
    <property type="protein sequence ID" value="CAD43212.1"/>
    <property type="molecule type" value="Genomic_DNA"/>
</dbReference>
<dbReference type="EMBL" id="CR382125">
    <property type="protein sequence ID" value="CAH00015.1"/>
    <property type="molecule type" value="Genomic_DNA"/>
</dbReference>
<dbReference type="RefSeq" id="XP_454928.1">
    <property type="nucleotide sequence ID" value="XM_454928.1"/>
</dbReference>
<dbReference type="SMR" id="Q6HA24"/>
<dbReference type="FunCoup" id="Q6HA24">
    <property type="interactions" value="237"/>
</dbReference>
<dbReference type="STRING" id="284590.Q6HA24"/>
<dbReference type="PaxDb" id="284590-Q6HA24"/>
<dbReference type="KEGG" id="kla:KLLA0_E21605g"/>
<dbReference type="eggNOG" id="KOG0404">
    <property type="taxonomic scope" value="Eukaryota"/>
</dbReference>
<dbReference type="HOGENOM" id="CLU_031864_5_1_1"/>
<dbReference type="InParanoid" id="Q6HA24"/>
<dbReference type="OMA" id="GPCHVLK"/>
<dbReference type="Proteomes" id="UP000000598">
    <property type="component" value="Chromosome E"/>
</dbReference>
<dbReference type="GO" id="GO:0005739">
    <property type="term" value="C:mitochondrion"/>
    <property type="evidence" value="ECO:0007669"/>
    <property type="project" value="UniProtKB-SubCell"/>
</dbReference>
<dbReference type="GO" id="GO:0004791">
    <property type="term" value="F:thioredoxin-disulfide reductase (NADPH) activity"/>
    <property type="evidence" value="ECO:0007669"/>
    <property type="project" value="UniProtKB-EC"/>
</dbReference>
<dbReference type="GO" id="GO:0019430">
    <property type="term" value="P:removal of superoxide radicals"/>
    <property type="evidence" value="ECO:0007669"/>
    <property type="project" value="InterPro"/>
</dbReference>
<dbReference type="FunFam" id="3.50.50.60:FF:000064">
    <property type="entry name" value="Thioredoxin reductase"/>
    <property type="match status" value="1"/>
</dbReference>
<dbReference type="Gene3D" id="3.50.50.60">
    <property type="entry name" value="FAD/NAD(P)-binding domain"/>
    <property type="match status" value="2"/>
</dbReference>
<dbReference type="InterPro" id="IPR036188">
    <property type="entry name" value="FAD/NAD-bd_sf"/>
</dbReference>
<dbReference type="InterPro" id="IPR023753">
    <property type="entry name" value="FAD/NAD-binding_dom"/>
</dbReference>
<dbReference type="InterPro" id="IPR050097">
    <property type="entry name" value="Ferredoxin-NADP_redctase_2"/>
</dbReference>
<dbReference type="InterPro" id="IPR008255">
    <property type="entry name" value="Pyr_nucl-diS_OxRdtase_2_AS"/>
</dbReference>
<dbReference type="InterPro" id="IPR005982">
    <property type="entry name" value="Thioredox_Rdtase"/>
</dbReference>
<dbReference type="NCBIfam" id="TIGR01292">
    <property type="entry name" value="TRX_reduct"/>
    <property type="match status" value="1"/>
</dbReference>
<dbReference type="PANTHER" id="PTHR48105">
    <property type="entry name" value="THIOREDOXIN REDUCTASE 1-RELATED-RELATED"/>
    <property type="match status" value="1"/>
</dbReference>
<dbReference type="Pfam" id="PF07992">
    <property type="entry name" value="Pyr_redox_2"/>
    <property type="match status" value="1"/>
</dbReference>
<dbReference type="PRINTS" id="PR00368">
    <property type="entry name" value="FADPNR"/>
</dbReference>
<dbReference type="PRINTS" id="PR00469">
    <property type="entry name" value="PNDRDTASEII"/>
</dbReference>
<dbReference type="SUPFAM" id="SSF51905">
    <property type="entry name" value="FAD/NAD(P)-binding domain"/>
    <property type="match status" value="1"/>
</dbReference>
<dbReference type="PROSITE" id="PS00573">
    <property type="entry name" value="PYRIDINE_REDOX_2"/>
    <property type="match status" value="1"/>
</dbReference>
<proteinExistence type="inferred from homology"/>